<feature type="chain" id="PRO_0000070332" description="Calcitonin receptor-like protein 1">
    <location>
        <begin position="1"/>
        <end position="546"/>
    </location>
</feature>
<feature type="topological domain" description="Cytoplasmic" evidence="1">
    <location>
        <begin position="1"/>
        <end position="171"/>
    </location>
</feature>
<feature type="transmembrane region" description="Helical; Name=1" evidence="1">
    <location>
        <begin position="172"/>
        <end position="192"/>
    </location>
</feature>
<feature type="topological domain" description="Extracellular" evidence="1">
    <location>
        <begin position="193"/>
        <end position="205"/>
    </location>
</feature>
<feature type="transmembrane region" description="Helical; Name=2" evidence="1">
    <location>
        <begin position="206"/>
        <end position="226"/>
    </location>
</feature>
<feature type="topological domain" description="Cytoplasmic" evidence="1">
    <location>
        <begin position="227"/>
        <end position="251"/>
    </location>
</feature>
<feature type="transmembrane region" description="Helical; Name=3" evidence="1">
    <location>
        <begin position="252"/>
        <end position="272"/>
    </location>
</feature>
<feature type="topological domain" description="Extracellular" evidence="1">
    <location>
        <begin position="273"/>
        <end position="292"/>
    </location>
</feature>
<feature type="transmembrane region" description="Helical; Name=4" evidence="1">
    <location>
        <begin position="293"/>
        <end position="313"/>
    </location>
</feature>
<feature type="topological domain" description="Cytoplasmic" evidence="1">
    <location>
        <begin position="314"/>
        <end position="333"/>
    </location>
</feature>
<feature type="transmembrane region" description="Helical; Name=5" evidence="1">
    <location>
        <begin position="334"/>
        <end position="354"/>
    </location>
</feature>
<feature type="topological domain" description="Extracellular" evidence="1">
    <location>
        <begin position="355"/>
        <end position="377"/>
    </location>
</feature>
<feature type="transmembrane region" description="Helical; Name=6" evidence="1">
    <location>
        <begin position="378"/>
        <end position="398"/>
    </location>
</feature>
<feature type="topological domain" description="Cytoplasmic" evidence="1">
    <location>
        <begin position="399"/>
        <end position="403"/>
    </location>
</feature>
<feature type="transmembrane region" description="Helical; Name=7" evidence="1">
    <location>
        <begin position="404"/>
        <end position="424"/>
    </location>
</feature>
<feature type="topological domain" description="Extracellular" evidence="1">
    <location>
        <begin position="425"/>
        <end position="546"/>
    </location>
</feature>
<feature type="region of interest" description="Disordered" evidence="2">
    <location>
        <begin position="472"/>
        <end position="546"/>
    </location>
</feature>
<feature type="compositionally biased region" description="Polar residues" evidence="2">
    <location>
        <begin position="473"/>
        <end position="485"/>
    </location>
</feature>
<feature type="compositionally biased region" description="Basic and acidic residues" evidence="2">
    <location>
        <begin position="500"/>
        <end position="520"/>
    </location>
</feature>
<feature type="glycosylation site" description="N-linked (GlcNAc...) asparagine" evidence="1">
    <location>
        <position position="365"/>
    </location>
</feature>
<feature type="glycosylation site" description="N-linked (GlcNAc...) asparagine" evidence="1">
    <location>
        <position position="366"/>
    </location>
</feature>
<feature type="glycosylation site" description="N-linked (GlcNAc...) asparagine" evidence="1">
    <location>
        <position position="472"/>
    </location>
</feature>
<feature type="glycosylation site" description="N-linked (GlcNAc...) asparagine" evidence="1">
    <location>
        <position position="476"/>
    </location>
</feature>
<feature type="glycosylation site" description="N-linked (GlcNAc...) asparagine" evidence="1">
    <location>
        <position position="540"/>
    </location>
</feature>
<feature type="splice variant" id="VSP_046483" description="In isoform b." evidence="11 12">
    <original>NITKDCHVSGVWSGRNAGEMGPTLP</original>
    <variation>YIVKRCDETGRWAGKKPGHYENPW</variation>
    <location>
        <begin position="108"/>
        <end position="132"/>
    </location>
</feature>
<feature type="splice variant" id="VSP_046484" description="In isoform b." evidence="11 12">
    <original>MCYTDEVIYIMQNLNNESLT</original>
    <variation>VCFKIDYEDAK</variation>
    <location>
        <begin position="139"/>
        <end position="158"/>
    </location>
</feature>
<feature type="splice variant" id="VSP_046482" description="In isoform c." evidence="11 12">
    <original>SNRSTKSP</original>
    <variation>YEE</variation>
    <location>
        <begin position="539"/>
        <end position="546"/>
    </location>
</feature>
<feature type="mutagenesis site" description="In bx142; reduced mate searching behavior." evidence="6">
    <original>G</original>
    <variation>D</variation>
    <location>
        <position position="298"/>
    </location>
</feature>
<dbReference type="EMBL" id="AY314776">
    <property type="protein sequence ID" value="AAQ84883.1"/>
    <property type="molecule type" value="mRNA"/>
</dbReference>
<dbReference type="EMBL" id="AY314777">
    <property type="protein sequence ID" value="AAQ84884.1"/>
    <property type="molecule type" value="mRNA"/>
</dbReference>
<dbReference type="EMBL" id="AY314778">
    <property type="protein sequence ID" value="AAQ84885.1"/>
    <property type="molecule type" value="mRNA"/>
</dbReference>
<dbReference type="EMBL" id="EF141317">
    <property type="protein sequence ID" value="ABO42256.1"/>
    <property type="molecule type" value="mRNA"/>
</dbReference>
<dbReference type="EMBL" id="EF141316">
    <property type="protein sequence ID" value="ABO42255.1"/>
    <property type="molecule type" value="mRNA"/>
</dbReference>
<dbReference type="EMBL" id="EF141318">
    <property type="protein sequence ID" value="ABO42257.1"/>
    <property type="molecule type" value="mRNA"/>
</dbReference>
<dbReference type="EMBL" id="FO080523">
    <property type="protein sequence ID" value="CCD64378.1"/>
    <property type="molecule type" value="Genomic_DNA"/>
</dbReference>
<dbReference type="EMBL" id="FO080523">
    <property type="protein sequence ID" value="CCD64379.1"/>
    <property type="molecule type" value="Genomic_DNA"/>
</dbReference>
<dbReference type="EMBL" id="FO080523">
    <property type="protein sequence ID" value="CCD64380.1"/>
    <property type="molecule type" value="Genomic_DNA"/>
</dbReference>
<dbReference type="PIR" id="E88487">
    <property type="entry name" value="E88487"/>
</dbReference>
<dbReference type="RefSeq" id="NP_001021170.1">
    <molecule id="Q09460-1"/>
    <property type="nucleotide sequence ID" value="NM_001025999.5"/>
</dbReference>
<dbReference type="RefSeq" id="NP_001021171.1">
    <molecule id="Q09460-3"/>
    <property type="nucleotide sequence ID" value="NM_001026000.5"/>
</dbReference>
<dbReference type="RefSeq" id="NP_001021172.1">
    <property type="nucleotide sequence ID" value="NM_001026001.2"/>
</dbReference>
<dbReference type="RefSeq" id="NP_001370425.1">
    <molecule id="Q09460-2"/>
    <property type="nucleotide sequence ID" value="NM_001382898.2"/>
</dbReference>
<dbReference type="SMR" id="Q09460"/>
<dbReference type="BioGRID" id="41158">
    <property type="interactions" value="2"/>
</dbReference>
<dbReference type="FunCoup" id="Q09460">
    <property type="interactions" value="446"/>
</dbReference>
<dbReference type="STRING" id="6239.C13B9.4a.2"/>
<dbReference type="GlyCosmos" id="Q09460">
    <property type="glycosylation" value="5 sites, No reported glycans"/>
</dbReference>
<dbReference type="PaxDb" id="6239-C13B9.4a.2"/>
<dbReference type="EnsemblMetazoa" id="C13B9.4a.1">
    <molecule id="Q09460-1"/>
    <property type="protein sequence ID" value="C13B9.4a.1"/>
    <property type="gene ID" value="WBGene00015735"/>
</dbReference>
<dbReference type="EnsemblMetazoa" id="C13B9.4a.2">
    <molecule id="Q09460-1"/>
    <property type="protein sequence ID" value="C13B9.4a.2"/>
    <property type="gene ID" value="WBGene00015735"/>
</dbReference>
<dbReference type="EnsemblMetazoa" id="C13B9.4a.3">
    <molecule id="Q09460-1"/>
    <property type="protein sequence ID" value="C13B9.4a.3"/>
    <property type="gene ID" value="WBGene00015735"/>
</dbReference>
<dbReference type="EnsemblMetazoa" id="C13B9.4b.1">
    <molecule id="Q09460-3"/>
    <property type="protein sequence ID" value="C13B9.4b.1"/>
    <property type="gene ID" value="WBGene00015735"/>
</dbReference>
<dbReference type="EnsemblMetazoa" id="C13B9.4b.2">
    <molecule id="Q09460-3"/>
    <property type="protein sequence ID" value="C13B9.4b.2"/>
    <property type="gene ID" value="WBGene00015735"/>
</dbReference>
<dbReference type="EnsemblMetazoa" id="C13B9.4b.3">
    <molecule id="Q09460-3"/>
    <property type="protein sequence ID" value="C13B9.4b.3"/>
    <property type="gene ID" value="WBGene00015735"/>
</dbReference>
<dbReference type="EnsemblMetazoa" id="C13B9.4c.1">
    <molecule id="Q09460-2"/>
    <property type="protein sequence ID" value="C13B9.4c.1"/>
    <property type="gene ID" value="WBGene00015735"/>
</dbReference>
<dbReference type="EnsemblMetazoa" id="C13B9.4c.2">
    <molecule id="Q09460-2"/>
    <property type="protein sequence ID" value="C13B9.4c.2"/>
    <property type="gene ID" value="WBGene00015735"/>
</dbReference>
<dbReference type="EnsemblMetazoa" id="C13B9.4c.3">
    <molecule id="Q09460-2"/>
    <property type="protein sequence ID" value="C13B9.4c.3"/>
    <property type="gene ID" value="WBGene00015735"/>
</dbReference>
<dbReference type="GeneID" id="175942"/>
<dbReference type="KEGG" id="cel:CELE_C13B9.4"/>
<dbReference type="UCSC" id="C13B9.4c.1">
    <property type="organism name" value="c. elegans"/>
</dbReference>
<dbReference type="AGR" id="WB:WBGene00015735"/>
<dbReference type="CTD" id="175942"/>
<dbReference type="WormBase" id="C13B9.4a">
    <molecule id="Q09460-1"/>
    <property type="protein sequence ID" value="CE30860"/>
    <property type="gene ID" value="WBGene00015735"/>
    <property type="gene designation" value="pdfr-1"/>
</dbReference>
<dbReference type="WormBase" id="C13B9.4b">
    <molecule id="Q09460-3"/>
    <property type="protein sequence ID" value="CE37087"/>
    <property type="gene ID" value="WBGene00015735"/>
    <property type="gene designation" value="pdfr-1"/>
</dbReference>
<dbReference type="WormBase" id="C13B9.4c">
    <molecule id="Q09460-2"/>
    <property type="protein sequence ID" value="CE37088"/>
    <property type="gene ID" value="WBGene00015735"/>
    <property type="gene designation" value="pdfr-1"/>
</dbReference>
<dbReference type="eggNOG" id="KOG4564">
    <property type="taxonomic scope" value="Eukaryota"/>
</dbReference>
<dbReference type="InParanoid" id="Q09460"/>
<dbReference type="OMA" id="EMFQKCT"/>
<dbReference type="OrthoDB" id="5967113at2759"/>
<dbReference type="PhylomeDB" id="Q09460"/>
<dbReference type="PRO" id="PR:Q09460"/>
<dbReference type="Proteomes" id="UP000001940">
    <property type="component" value="Chromosome III"/>
</dbReference>
<dbReference type="Bgee" id="WBGene00015735">
    <property type="expression patterns" value="Expressed in larva and 14 other cell types or tissues"/>
</dbReference>
<dbReference type="ExpressionAtlas" id="Q09460">
    <property type="expression patterns" value="baseline and differential"/>
</dbReference>
<dbReference type="GO" id="GO:0005886">
    <property type="term" value="C:plasma membrane"/>
    <property type="evidence" value="ECO:0000315"/>
    <property type="project" value="UniProtKB"/>
</dbReference>
<dbReference type="GO" id="GO:0097642">
    <property type="term" value="F:calcitonin family receptor activity"/>
    <property type="evidence" value="ECO:0000315"/>
    <property type="project" value="UniProtKB"/>
</dbReference>
<dbReference type="GO" id="GO:0004948">
    <property type="term" value="F:calcitonin receptor activity"/>
    <property type="evidence" value="ECO:0000250"/>
    <property type="project" value="WormBase"/>
</dbReference>
<dbReference type="GO" id="GO:0008528">
    <property type="term" value="F:G protein-coupled peptide receptor activity"/>
    <property type="evidence" value="ECO:0000318"/>
    <property type="project" value="GO_Central"/>
</dbReference>
<dbReference type="GO" id="GO:0007189">
    <property type="term" value="P:adenylate cyclase-activating G protein-coupled receptor signaling pathway"/>
    <property type="evidence" value="ECO:0000315"/>
    <property type="project" value="UniProtKB"/>
</dbReference>
<dbReference type="GO" id="GO:0007188">
    <property type="term" value="P:adenylate cyclase-modulating G protein-coupled receptor signaling pathway"/>
    <property type="evidence" value="ECO:0000315"/>
    <property type="project" value="UniProtKB"/>
</dbReference>
<dbReference type="GO" id="GO:0007166">
    <property type="term" value="P:cell surface receptor signaling pathway"/>
    <property type="evidence" value="ECO:0000315"/>
    <property type="project" value="UniProtKB"/>
</dbReference>
<dbReference type="GO" id="GO:0006874">
    <property type="term" value="P:intracellular calcium ion homeostasis"/>
    <property type="evidence" value="ECO:0000315"/>
    <property type="project" value="UniProtKB"/>
</dbReference>
<dbReference type="GO" id="GO:0040011">
    <property type="term" value="P:locomotion"/>
    <property type="evidence" value="ECO:0000315"/>
    <property type="project" value="UniProtKB"/>
</dbReference>
<dbReference type="GO" id="GO:0031987">
    <property type="term" value="P:locomotion involved in locomotory behavior"/>
    <property type="evidence" value="ECO:0000315"/>
    <property type="project" value="UniProtKB"/>
</dbReference>
<dbReference type="GO" id="GO:0035641">
    <property type="term" value="P:locomotory exploration behavior"/>
    <property type="evidence" value="ECO:0000315"/>
    <property type="project" value="UniProtKB"/>
</dbReference>
<dbReference type="GO" id="GO:0060179">
    <property type="term" value="P:male mating behavior"/>
    <property type="evidence" value="ECO:0000315"/>
    <property type="project" value="UniProtKB"/>
</dbReference>
<dbReference type="GO" id="GO:0010628">
    <property type="term" value="P:positive regulation of gene expression"/>
    <property type="evidence" value="ECO:0000315"/>
    <property type="project" value="UniProtKB"/>
</dbReference>
<dbReference type="GO" id="GO:0030431">
    <property type="term" value="P:sleep"/>
    <property type="evidence" value="ECO:0000315"/>
    <property type="project" value="UniProtKB"/>
</dbReference>
<dbReference type="CDD" id="cd15261">
    <property type="entry name" value="7tmB1_PDFR"/>
    <property type="match status" value="1"/>
</dbReference>
<dbReference type="FunFam" id="1.20.1070.10:FF:000576">
    <property type="entry name" value="Calcitonin receptor-like protein 1"/>
    <property type="match status" value="1"/>
</dbReference>
<dbReference type="FunFam" id="4.10.1240.10:FF:000029">
    <property type="entry name" value="PDF receptor isoform X3"/>
    <property type="match status" value="1"/>
</dbReference>
<dbReference type="Gene3D" id="4.10.1240.10">
    <property type="entry name" value="GPCR, family 2, extracellular hormone receptor domain"/>
    <property type="match status" value="1"/>
</dbReference>
<dbReference type="Gene3D" id="1.20.1070.10">
    <property type="entry name" value="Rhodopsin 7-helix transmembrane proteins"/>
    <property type="match status" value="1"/>
</dbReference>
<dbReference type="InterPro" id="IPR050332">
    <property type="entry name" value="GPCR_2"/>
</dbReference>
<dbReference type="InterPro" id="IPR017981">
    <property type="entry name" value="GPCR_2-like_7TM"/>
</dbReference>
<dbReference type="InterPro" id="IPR036445">
    <property type="entry name" value="GPCR_2_extracell_dom_sf"/>
</dbReference>
<dbReference type="InterPro" id="IPR001879">
    <property type="entry name" value="GPCR_2_extracellular_dom"/>
</dbReference>
<dbReference type="InterPro" id="IPR000832">
    <property type="entry name" value="GPCR_2_secretin-like"/>
</dbReference>
<dbReference type="InterPro" id="IPR017983">
    <property type="entry name" value="GPCR_2_secretin-like_CS"/>
</dbReference>
<dbReference type="PANTHER" id="PTHR45620:SF17">
    <property type="entry name" value="PDF RECEPTOR"/>
    <property type="match status" value="1"/>
</dbReference>
<dbReference type="PANTHER" id="PTHR45620">
    <property type="entry name" value="PDF RECEPTOR-LIKE PROTEIN-RELATED"/>
    <property type="match status" value="1"/>
</dbReference>
<dbReference type="Pfam" id="PF00002">
    <property type="entry name" value="7tm_2"/>
    <property type="match status" value="1"/>
</dbReference>
<dbReference type="Pfam" id="PF02793">
    <property type="entry name" value="HRM"/>
    <property type="match status" value="1"/>
</dbReference>
<dbReference type="PRINTS" id="PR00249">
    <property type="entry name" value="GPCRSECRETIN"/>
</dbReference>
<dbReference type="SMART" id="SM00008">
    <property type="entry name" value="HormR"/>
    <property type="match status" value="1"/>
</dbReference>
<dbReference type="SUPFAM" id="SSF111418">
    <property type="entry name" value="Hormone receptor domain"/>
    <property type="match status" value="1"/>
</dbReference>
<dbReference type="PROSITE" id="PS00649">
    <property type="entry name" value="G_PROTEIN_RECEP_F2_1"/>
    <property type="match status" value="1"/>
</dbReference>
<dbReference type="PROSITE" id="PS00650">
    <property type="entry name" value="G_PROTEIN_RECEP_F2_2"/>
    <property type="match status" value="1"/>
</dbReference>
<dbReference type="PROSITE" id="PS50227">
    <property type="entry name" value="G_PROTEIN_RECEP_F2_3"/>
    <property type="match status" value="1"/>
</dbReference>
<dbReference type="PROSITE" id="PS50261">
    <property type="entry name" value="G_PROTEIN_RECEP_F2_4"/>
    <property type="match status" value="1"/>
</dbReference>
<keyword id="KW-0025">Alternative splicing</keyword>
<keyword id="KW-1003">Cell membrane</keyword>
<keyword id="KW-0297">G-protein coupled receptor</keyword>
<keyword id="KW-0325">Glycoprotein</keyword>
<keyword id="KW-0472">Membrane</keyword>
<keyword id="KW-0675">Receptor</keyword>
<keyword id="KW-1185">Reference proteome</keyword>
<keyword id="KW-0807">Transducer</keyword>
<keyword id="KW-0812">Transmembrane</keyword>
<keyword id="KW-1133">Transmembrane helix</keyword>
<organism>
    <name type="scientific">Caenorhabditis elegans</name>
    <dbReference type="NCBI Taxonomy" id="6239"/>
    <lineage>
        <taxon>Eukaryota</taxon>
        <taxon>Metazoa</taxon>
        <taxon>Ecdysozoa</taxon>
        <taxon>Nematoda</taxon>
        <taxon>Chromadorea</taxon>
        <taxon>Rhabditida</taxon>
        <taxon>Rhabditina</taxon>
        <taxon>Rhabditomorpha</taxon>
        <taxon>Rhabditoidea</taxon>
        <taxon>Rhabditidae</taxon>
        <taxon>Peloderinae</taxon>
        <taxon>Caenorhabditis</taxon>
    </lineage>
</organism>
<sequence>MADATSPFNVSILDNSTKLSEMVESGWNVLASTSVQAFNEAMDVLEESYPLCKKMLDHNNLFPERDPNDTRIWCNATYDTVLCWPPTPANSSVTLQCPHMKGLDPNKNITKDCHVSGVWSGRNAGEMGPTLPGWTNFTMCYTDEVIYIMQNLNNESLTIAQEVARNARKLEFVGLGLSLVSLILAISIFSYFRRLRVFRNLLHLHLMIAMLMVVILRLVLYIDLIFTGENGPHTNSAEGKTINTMPIVCEGMFFFLEYFKTVTFCWMFLEGIYLNNQIVFGFFNSEPKLLPYFIAGYGIPLVHTMLWLLVVLIKKDFKVERCLGSYYLEPEFWILDGPRMAELVINLFFICNVIRVLYSKVRESNNTSEAGLKKSVKAAMMLLPLLGVPNIMQTIPFAPTRDNIMVFAVWTYTASFTYMYQGLMVASIYCFTNKEVNHVLKTFYARYRLLHKSQNELRRGSRSVASHYAAKNGTANASAPQTNNADEFGKLSPFPSRSKKGSDDSTTKLMKDAVMEEEKNANNNGYGSAGEMTPLREGSNRSTKSP</sequence>
<name>PDFR1_CAEEL</name>
<evidence type="ECO:0000255" key="1"/>
<evidence type="ECO:0000256" key="2">
    <source>
        <dbReference type="SAM" id="MobiDB-lite"/>
    </source>
</evidence>
<evidence type="ECO:0000269" key="3">
    <source>
    </source>
</evidence>
<evidence type="ECO:0000269" key="4">
    <source>
    </source>
</evidence>
<evidence type="ECO:0000269" key="5">
    <source>
    </source>
</evidence>
<evidence type="ECO:0000269" key="6">
    <source>
    </source>
</evidence>
<evidence type="ECO:0000269" key="7">
    <source>
    </source>
</evidence>
<evidence type="ECO:0000269" key="8">
    <source>
    </source>
</evidence>
<evidence type="ECO:0000269" key="9">
    <source>
    </source>
</evidence>
<evidence type="ECO:0000269" key="10">
    <source>
    </source>
</evidence>
<evidence type="ECO:0000303" key="11">
    <source>
    </source>
</evidence>
<evidence type="ECO:0000303" key="12">
    <source ref="2"/>
</evidence>
<evidence type="ECO:0000305" key="13"/>
<accession>Q09460</accession>
<accession>B2BBX5</accession>
<accession>G5EDW6</accession>
<accession>G5EFM1</accession>
<proteinExistence type="evidence at protein level"/>
<reference key="1">
    <citation type="journal article" date="2008" name="J. Biol. Chem.">
        <title>Functional characterization of three G protein-coupled receptors for pigment dispersing factors in Caenorhabditis elegans.</title>
        <authorList>
            <person name="Janssen T."/>
            <person name="Husson S.J."/>
            <person name="Lindemans M."/>
            <person name="Mertens I."/>
            <person name="Rademakers S."/>
            <person name="Donck K.V."/>
            <person name="Geysen J."/>
            <person name="Jansen G."/>
            <person name="Schoofs L."/>
        </authorList>
    </citation>
    <scope>NUCLEOTIDE SEQUENCE [MRNA] (ISOFORMS A; B AND C)</scope>
    <scope>FUNCTION</scope>
    <scope>TISSUE SPECIFICITY</scope>
</reference>
<reference key="2">
    <citation type="submission" date="2003-05" db="EMBL/GenBank/DDBJ databases">
        <title>Molecular and evolutionary characterization of family B G-protein coupled receptors in Caenorhabditis elegans.</title>
        <authorList>
            <person name="Mastwal S.S."/>
            <person name="Yu D."/>
            <person name="Hedgecock E.M."/>
        </authorList>
    </citation>
    <scope>NUCLEOTIDE SEQUENCE [MRNA] (ISOFORMS A; B AND C)</scope>
</reference>
<reference key="3">
    <citation type="journal article" date="1998" name="Science">
        <title>Genome sequence of the nematode C. elegans: a platform for investigating biology.</title>
        <authorList>
            <consortium name="The C. elegans sequencing consortium"/>
        </authorList>
    </citation>
    <scope>NUCLEOTIDE SEQUENCE [LARGE SCALE GENOMIC DNA]</scope>
    <scope>ALTERNATIVE SPLICING</scope>
    <source>
        <strain>Bristol N2</strain>
    </source>
</reference>
<reference key="4">
    <citation type="journal article" date="2003" name="PLoS Biol.">
        <title>Genome-wide RNAi of C. elegans using the hypersensitive rrf-3 strain reveals novel gene functions.</title>
        <authorList>
            <person name="Simmer F."/>
            <person name="Moorman C."/>
            <person name="van der Linden A.M."/>
            <person name="Kuijk E."/>
            <person name="van den Berghe P.V.E."/>
            <person name="Kamath R.S."/>
            <person name="Fraser A.G."/>
            <person name="Ahringer J."/>
            <person name="Plasterk R.H.A."/>
        </authorList>
    </citation>
    <scope>FUNCTION</scope>
    <scope>DISRUPTION PHENOTYPE</scope>
</reference>
<reference key="5">
    <citation type="journal article" date="2012" name="Mol. Cell. Endocrinol.">
        <title>PDF receptor signaling in Caenorhabditis elegans modulates locomotion and egg-laying.</title>
        <authorList>
            <person name="Meelkop E."/>
            <person name="Temmerman L."/>
            <person name="Janssen T."/>
            <person name="Suetens N."/>
            <person name="Beets I."/>
            <person name="Van Rompay L."/>
            <person name="Shanmugam N."/>
            <person name="Husson S.J."/>
            <person name="Schoofs L."/>
        </authorList>
    </citation>
    <scope>FUNCTION</scope>
    <scope>DISRUPTION PHENOTYPE</scope>
</reference>
<reference key="6">
    <citation type="journal article" date="2012" name="Nat. Neurosci.">
        <title>PDF-1 neuropeptide signaling modulates a neural circuit for mate-searching behavior in C. elegans.</title>
        <authorList>
            <person name="Barrios A."/>
            <person name="Ghosh R."/>
            <person name="Fang C."/>
            <person name="Emmons S.W."/>
            <person name="Barr M.M."/>
        </authorList>
    </citation>
    <scope>FUNCTION</scope>
    <scope>DEVELOPMENTAL STAGE</scope>
    <scope>TISSUE SPECIFICITY</scope>
    <scope>DISRUPTION PHENOTYPE</scope>
    <scope>MUTAGENESIS OF GLY-298</scope>
</reference>
<reference key="7">
    <citation type="journal article" date="2013" name="Cell">
        <title>Serotonin and the neuropeptide PDF initiate and extend opposing behavioral states in C. elegans.</title>
        <authorList>
            <person name="Flavell S.W."/>
            <person name="Pokala N."/>
            <person name="Macosko E.Z."/>
            <person name="Albrecht D.R."/>
            <person name="Larsch J."/>
            <person name="Bargmann C.I."/>
        </authorList>
    </citation>
    <scope>FUNCTION</scope>
    <scope>TISSUE SPECIFICITY</scope>
</reference>
<reference evidence="13" key="8">
    <citation type="journal article" date="2013" name="Neuron">
        <title>Analysis of NPR-1 reveals a circuit mechanism for behavioral quiescence in C. elegans.</title>
        <authorList>
            <person name="Choi S."/>
            <person name="Chatzigeorgiou M."/>
            <person name="Taylor K.P."/>
            <person name="Schafer W.R."/>
            <person name="Kaplan J.M."/>
        </authorList>
    </citation>
    <scope>FUNCTION</scope>
</reference>
<reference evidence="13" key="9">
    <citation type="journal article" date="2015" name="Genes Brain Behav.">
        <title>Pigment-dispersing factor signaling in the circadian system of Caenorhabditis elegans.</title>
        <authorList>
            <person name="Herrero A."/>
            <person name="Romanowski A."/>
            <person name="Meelkop E."/>
            <person name="Caldart C.S."/>
            <person name="Schoofs L."/>
            <person name="Golombek D.A."/>
        </authorList>
    </citation>
    <scope>FUNCTION</scope>
</reference>
<reference evidence="13" key="10">
    <citation type="journal article" date="2018" name="Elife">
        <title>PDF-1 neuropeptide signaling regulates sexually dimorphic gene expression in shared sensory neurons of C. elegans.</title>
        <authorList>
            <person name="Hilbert Z.A."/>
            <person name="Kim D.H."/>
        </authorList>
    </citation>
    <scope>FUNCTION</scope>
    <scope>DISRUPTION PHENOTYPE</scope>
</reference>
<comment type="function">
    <text evidence="3 4 5 6 7 8 9 10">G-protein coupled receptor for PDF neuropeptides (PubMed:18390545). Plays a role in responses to environmental signals, including chemicals and touch, and in modulating locomotory behaviors (PubMed:14551910, PubMed:18390545, PubMed:22579613, PubMed:23143519, PubMed:23972393, PubMed:26113231, PubMed:30024377). Capable of transducing signals via an adenylate cyclase acy-1 cAMP-dependent pathway (PubMed:23972393, PubMed:30024377). Required to regulate the sex-specific expression of TGFbeta-like daf-7 in the ASJ chemosensory neurons, perhaps acting via acy-1 (PubMed:30024377). Involved in modulating mate searching behavior independent of nutritional status (PubMed:14551910, PubMed:18390545, PubMed:22579613, PubMed:23143519). In the presence of food, plays a role in initiating and extending exploratory roaming behavior, perhaps acting in AIY, RIM, RIA, and other neurons, in opposition to 5-hydroxytryptamine (serotonin) signaling (PubMed:23972393). Involved in mediating arousal from the sleep-like state called lethargus, which occurs during molting between larval and adult stages, in part by regulating touch sensitivity (PubMed:18390545, PubMed:23764289). May play a role in circadian rhythms of locomotor activity (PubMed:26113231).</text>
</comment>
<comment type="function">
    <molecule>Isoform a</molecule>
    <text evidence="4">G-protein coupled receptor which is activated by neuropeptides PDF-1 and PDF-2 (PubMed:18390545). Probably acts through the G-alpha(s) type of G proteins to elevate cAMP levels (PubMed:18390545).</text>
</comment>
<comment type="function">
    <molecule>Isoform b</molecule>
    <text evidence="4">G-protein coupled receptor which is activated by neuropeptides PDF-1 and PDF-2 (PubMed:18390545). Probably acts through the G-alpha(s) type of G proteins to elevate cAMP levels (PubMed:18390545).</text>
</comment>
<comment type="function">
    <molecule>Isoform c</molecule>
    <text evidence="4">G-protein coupled receptor which is activated by neuropeptides PDF-1 and PDF-2; however, activation is lower compared to isoforms a and b (PubMed:18390545). Probably inhibits cAMP levels through the G-alpha(i/o) type of G proteins (PubMed:18390545).</text>
</comment>
<comment type="subcellular location">
    <subcellularLocation>
        <location evidence="13">Cell membrane</location>
        <topology evidence="13">Multi-pass membrane protein</topology>
    </subcellularLocation>
</comment>
<comment type="alternative products">
    <event type="alternative splicing"/>
    <isoform>
        <id>Q09460-1</id>
        <name>a</name>
        <name>Seb-1a</name>
        <sequence type="displayed"/>
    </isoform>
    <isoform>
        <id>Q09460-2</id>
        <name>c</name>
        <name>Seb-1c</name>
        <sequence type="described" ref="VSP_046482"/>
    </isoform>
    <isoform>
        <id>Q09460-3</id>
        <name>b</name>
        <name>Seb-1b</name>
        <sequence type="described" ref="VSP_046483 VSP_046484"/>
    </isoform>
</comment>
<comment type="tissue specificity">
    <text evidence="4 6 8">Expression was observed in the mechanosensory neuron pairs PLM, ALM, FLP, OLQD, and OLQV, the chemosensory neurons PHA, PHB, RMEV, the ring motor neurons RMED, and the pharyngeal interneuron pair I1 (PubMed:18390545). Expression in sensory neurons PHA, PQR and URY are responsible for mate searching behavior (PubMed:23143519). Expressed in AIY, RIM, RIA, and other neurons.</text>
</comment>
<comment type="developmental stage">
    <text evidence="6">Expressed in both hermaphrodites and males at the L4 stage in the head, body wall muscle cells and tail.</text>
</comment>
<comment type="disruption phenotype">
    <text evidence="3 5 6 10">Disrupted locomotion (unc); decreased speed, increased number of reversals and loss of mate searching behavior (PubMed:14551910, PubMed:22579613, PubMed:23143519). RNAi-mediated knockdown causes reduced expression of TGFbeta-like daf-7 in ASJ chemosensory neurons (PubMed:30024377).</text>
</comment>
<comment type="similarity">
    <text evidence="13">Belongs to the G-protein coupled receptor 2 family.</text>
</comment>
<gene>
    <name type="primary">pdfr-1</name>
    <name type="synonym">seb-1</name>
    <name type="ORF">C13B9.4</name>
</gene>
<protein>
    <recommendedName>
        <fullName>Calcitonin receptor-like protein 1</fullName>
    </recommendedName>
    <alternativeName>
        <fullName>Pigment dispersing factor neuropeptide receptor homolog 1</fullName>
    </alternativeName>
</protein>